<keyword id="KW-0067">ATP-binding</keyword>
<keyword id="KW-0131">Cell cycle</keyword>
<keyword id="KW-0132">Cell division</keyword>
<keyword id="KW-0963">Cytoplasm</keyword>
<keyword id="KW-0547">Nucleotide-binding</keyword>
<keyword id="KW-1185">Reference proteome</keyword>
<evidence type="ECO:0000255" key="1"/>
<evidence type="ECO:0000269" key="2">
    <source>
    </source>
</evidence>
<evidence type="ECO:0000269" key="3">
    <source>
    </source>
</evidence>
<evidence type="ECO:0000303" key="4">
    <source>
    </source>
</evidence>
<evidence type="ECO:0000303" key="5">
    <source>
    </source>
</evidence>
<evidence type="ECO:0000305" key="6"/>
<evidence type="ECO:0000312" key="7">
    <source>
        <dbReference type="EMBL" id="AAY80706.1"/>
    </source>
</evidence>
<gene>
    <name evidence="4" type="primary">cdvC</name>
    <name evidence="5" type="synonym">vps4</name>
    <name evidence="7" type="ordered locus">Saci_1372</name>
</gene>
<proteinExistence type="evidence at protein level"/>
<feature type="chain" id="PRO_0000438770" description="Cell division protein C">
    <location>
        <begin position="1"/>
        <end position="374"/>
    </location>
</feature>
<feature type="domain" description="MIT" evidence="1">
    <location>
        <begin position="11"/>
        <end position="73"/>
    </location>
</feature>
<feature type="binding site" evidence="1">
    <location>
        <begin position="144"/>
        <end position="151"/>
    </location>
    <ligand>
        <name>ATP</name>
        <dbReference type="ChEBI" id="CHEBI:30616"/>
    </ligand>
</feature>
<protein>
    <recommendedName>
        <fullName evidence="6">Cell division protein C</fullName>
    </recommendedName>
</protein>
<sequence>MSAQVMLEEMARKYAINAVKADKEGNAEEAITNYKKAIEVLAQLVSLYRDGSTAAIYEQMINEYKRRIEVLKELIPADGAGNGNGKHSQVSVDDLVMKEKPKVNFNDIVGLEDVKEALKEAIVYPTRRPDLFPLGWPRGILVYGPPGCGKTMIAAAVANEIDSYFIQVDAASVMSKWLGEAEKNVAKIFNSARELSKKDGKPVIIFIDEIDALLGTYNSENGGEVRVRNQFLKEMDGLQDKSENFKVYVIGATNKPWRLDEPFLRRFQKRIYIRLPDIEQRKSLLLHYTSKIKMDNVNIDELAKMTEGYTASDIKDIVQAAHIRVVKEMFDKKLEQPRAVNMEDFKEILKIRKPSVNSEVIKVYEAWHEKYKAL</sequence>
<organism>
    <name type="scientific">Sulfolobus acidocaldarius (strain ATCC 33909 / DSM 639 / JCM 8929 / NBRC 15157 / NCIMB 11770)</name>
    <dbReference type="NCBI Taxonomy" id="330779"/>
    <lineage>
        <taxon>Archaea</taxon>
        <taxon>Thermoproteota</taxon>
        <taxon>Thermoprotei</taxon>
        <taxon>Sulfolobales</taxon>
        <taxon>Sulfolobaceae</taxon>
        <taxon>Sulfolobus</taxon>
    </lineage>
</organism>
<accession>F2Z6D2</accession>
<reference key="1">
    <citation type="journal article" date="2005" name="J. Bacteriol.">
        <title>The genome of Sulfolobus acidocaldarius, a model organism of the Crenarchaeota.</title>
        <authorList>
            <person name="Chen L."/>
            <person name="Bruegger K."/>
            <person name="Skovgaard M."/>
            <person name="Redder P."/>
            <person name="She Q."/>
            <person name="Torarinsson E."/>
            <person name="Greve B."/>
            <person name="Awayez M."/>
            <person name="Zibat A."/>
            <person name="Klenk H.-P."/>
            <person name="Garrett R.A."/>
        </authorList>
    </citation>
    <scope>NUCLEOTIDE SEQUENCE [LARGE SCALE GENOMIC DNA]</scope>
    <source>
        <strain>ATCC 33909 / DSM 639 / JCM 8929 / NBRC 15157 / NCIMB 11770</strain>
    </source>
</reference>
<reference key="2">
    <citation type="journal article" date="2008" name="Proc. Natl. Acad. Sci. U.S.A.">
        <title>A unique cell division machinery in the Archaea.</title>
        <authorList>
            <person name="Lindaas A.C."/>
            <person name="Karlsson E.A."/>
            <person name="Lindgren M.T."/>
            <person name="Ettema T.J."/>
            <person name="Bernander R."/>
        </authorList>
    </citation>
    <scope>FUNCTION</scope>
    <scope>SUBCELLULAR LOCATION</scope>
    <scope>INDUCTION</scope>
    <source>
        <strain>ATCC 33909 / DSM 639 / JCM 8929 / NBRC 15157 / NCIMB 11770</strain>
    </source>
</reference>
<reference key="3">
    <citation type="journal article" date="2008" name="Science">
        <title>A role for the ESCRT system in cell division in archaea.</title>
        <authorList>
            <person name="Samson R.Y."/>
            <person name="Obita T."/>
            <person name="Freund S.M."/>
            <person name="Williams R.L."/>
            <person name="Bell S.D."/>
        </authorList>
    </citation>
    <scope>FUNCTION</scope>
    <scope>SUBCELLULAR LOCATION</scope>
    <scope>INDUCTION</scope>
    <scope>INTERACTION WITH CDVB</scope>
    <scope>DOMAIN</scope>
</reference>
<comment type="function">
    <text evidence="2 3">Part of a cell division machinery (PubMed:18987308, PubMed:19008417). The CdvA, CdvB and CdvC proteins polymerize between segregating nucleoids and persist throughout cell division, forming a successively smaller structure during constriction (PubMed:18987308).</text>
</comment>
<comment type="subunit">
    <text evidence="3">Interacts with CdvB.</text>
</comment>
<comment type="subcellular location">
    <subcellularLocation>
        <location evidence="2 3">Cytoplasm</location>
        <location evidence="2 3">Nucleoid</location>
    </subcellularLocation>
    <text evidence="2 3">Forms band-like structures between segregating nucleoids (PubMed:18987308). Localizes to the mid-cell in dividing cells (PubMed:19008417).</text>
</comment>
<comment type="induction">
    <text evidence="2 3">Induced around the genome segregation and cell division stages (PubMed:18987308). Down-regulated after UV irradiation, indicating division inhibition in response to DNA damage (PubMed:18987308). Expression is highest in dividing cells (PubMed:19008417).</text>
</comment>
<comment type="domain">
    <text evidence="3">The MIT domain is involved in interaction with CdvB.</text>
</comment>
<comment type="similarity">
    <text evidence="6">Belongs to the AAA ATPase family.</text>
</comment>
<dbReference type="EMBL" id="CP000077">
    <property type="protein sequence ID" value="AAY80706.1"/>
    <property type="molecule type" value="Genomic_DNA"/>
</dbReference>
<dbReference type="RefSeq" id="WP_011278208.1">
    <property type="nucleotide sequence ID" value="NC_007181.1"/>
</dbReference>
<dbReference type="SMR" id="F2Z6D2"/>
<dbReference type="STRING" id="330779.Saci_1372"/>
<dbReference type="TCDB" id="3.A.31.1.3">
    <property type="family name" value="the endosomal sorting complexes required for transport iii (escrt-iii) family"/>
</dbReference>
<dbReference type="GeneID" id="14551874"/>
<dbReference type="GeneID" id="78441718"/>
<dbReference type="KEGG" id="sai:Saci_1372"/>
<dbReference type="PATRIC" id="fig|330779.12.peg.1324"/>
<dbReference type="eggNOG" id="arCOG01307">
    <property type="taxonomic scope" value="Archaea"/>
</dbReference>
<dbReference type="HOGENOM" id="CLU_000688_21_2_2"/>
<dbReference type="Proteomes" id="UP000001018">
    <property type="component" value="Chromosome"/>
</dbReference>
<dbReference type="GO" id="GO:0005737">
    <property type="term" value="C:cytoplasm"/>
    <property type="evidence" value="ECO:0007669"/>
    <property type="project" value="UniProtKB-KW"/>
</dbReference>
<dbReference type="GO" id="GO:0009295">
    <property type="term" value="C:nucleoid"/>
    <property type="evidence" value="ECO:0007669"/>
    <property type="project" value="UniProtKB-SubCell"/>
</dbReference>
<dbReference type="GO" id="GO:0005524">
    <property type="term" value="F:ATP binding"/>
    <property type="evidence" value="ECO:0007669"/>
    <property type="project" value="UniProtKB-KW"/>
</dbReference>
<dbReference type="GO" id="GO:0016887">
    <property type="term" value="F:ATP hydrolysis activity"/>
    <property type="evidence" value="ECO:0007669"/>
    <property type="project" value="InterPro"/>
</dbReference>
<dbReference type="GO" id="GO:0051301">
    <property type="term" value="P:cell division"/>
    <property type="evidence" value="ECO:0007669"/>
    <property type="project" value="UniProtKB-KW"/>
</dbReference>
<dbReference type="CDD" id="cd02682">
    <property type="entry name" value="MIT_AAA_Arch"/>
    <property type="match status" value="1"/>
</dbReference>
<dbReference type="CDD" id="cd19509">
    <property type="entry name" value="RecA-like_VPS4-like"/>
    <property type="match status" value="1"/>
</dbReference>
<dbReference type="FunFam" id="1.10.8.60:FF:000313">
    <property type="entry name" value="AAA ATPase, central domain protein"/>
    <property type="match status" value="1"/>
</dbReference>
<dbReference type="FunFam" id="3.40.50.300:FF:001054">
    <property type="entry name" value="ATPase, AAA family, putative"/>
    <property type="match status" value="1"/>
</dbReference>
<dbReference type="Gene3D" id="1.10.8.60">
    <property type="match status" value="1"/>
</dbReference>
<dbReference type="Gene3D" id="3.40.50.300">
    <property type="entry name" value="P-loop containing nucleotide triphosphate hydrolases"/>
    <property type="match status" value="1"/>
</dbReference>
<dbReference type="Gene3D" id="1.20.58.80">
    <property type="entry name" value="Phosphotransferase system, lactose/cellobiose-type IIA subunit"/>
    <property type="match status" value="1"/>
</dbReference>
<dbReference type="InterPro" id="IPR003593">
    <property type="entry name" value="AAA+_ATPase"/>
</dbReference>
<dbReference type="InterPro" id="IPR041569">
    <property type="entry name" value="AAA_lid_3"/>
</dbReference>
<dbReference type="InterPro" id="IPR003959">
    <property type="entry name" value="ATPase_AAA_core"/>
</dbReference>
<dbReference type="InterPro" id="IPR054951">
    <property type="entry name" value="cell_div_CdvC"/>
</dbReference>
<dbReference type="InterPro" id="IPR007330">
    <property type="entry name" value="MIT_dom"/>
</dbReference>
<dbReference type="InterPro" id="IPR036181">
    <property type="entry name" value="MIT_dom_sf"/>
</dbReference>
<dbReference type="InterPro" id="IPR050304">
    <property type="entry name" value="MT-severing_AAA_ATPase"/>
</dbReference>
<dbReference type="InterPro" id="IPR027417">
    <property type="entry name" value="P-loop_NTPase"/>
</dbReference>
<dbReference type="NCBIfam" id="NF041006">
    <property type="entry name" value="cell_div_CdvC"/>
    <property type="match status" value="1"/>
</dbReference>
<dbReference type="PANTHER" id="PTHR23074">
    <property type="entry name" value="AAA DOMAIN-CONTAINING"/>
    <property type="match status" value="1"/>
</dbReference>
<dbReference type="PANTHER" id="PTHR23074:SF83">
    <property type="entry name" value="VACUOLAR PROTEIN SORTING-ASSOCIATED PROTEIN 4A"/>
    <property type="match status" value="1"/>
</dbReference>
<dbReference type="Pfam" id="PF00004">
    <property type="entry name" value="AAA"/>
    <property type="match status" value="1"/>
</dbReference>
<dbReference type="Pfam" id="PF17862">
    <property type="entry name" value="AAA_lid_3"/>
    <property type="match status" value="1"/>
</dbReference>
<dbReference type="Pfam" id="PF04212">
    <property type="entry name" value="MIT"/>
    <property type="match status" value="1"/>
</dbReference>
<dbReference type="SMART" id="SM00382">
    <property type="entry name" value="AAA"/>
    <property type="match status" value="1"/>
</dbReference>
<dbReference type="SMART" id="SM00745">
    <property type="entry name" value="MIT"/>
    <property type="match status" value="1"/>
</dbReference>
<dbReference type="SUPFAM" id="SSF116846">
    <property type="entry name" value="MIT domain"/>
    <property type="match status" value="1"/>
</dbReference>
<dbReference type="SUPFAM" id="SSF52540">
    <property type="entry name" value="P-loop containing nucleoside triphosphate hydrolases"/>
    <property type="match status" value="1"/>
</dbReference>
<name>CDVC_SULAC</name>